<evidence type="ECO:0000250" key="1"/>
<evidence type="ECO:0000250" key="2">
    <source>
        <dbReference type="UniProtKB" id="P15226"/>
    </source>
</evidence>
<evidence type="ECO:0000250" key="3">
    <source>
        <dbReference type="UniProtKB" id="Q1I176"/>
    </source>
</evidence>
<evidence type="ECO:0000255" key="4"/>
<evidence type="ECO:0000255" key="5">
    <source>
        <dbReference type="PROSITE-ProRule" id="PRU01210"/>
    </source>
</evidence>
<evidence type="ECO:0000305" key="6"/>
<evidence type="ECO:0000305" key="7">
    <source>
    </source>
</evidence>
<evidence type="ECO:0000312" key="8">
    <source>
        <dbReference type="EMBL" id="ADZ89306.1"/>
    </source>
</evidence>
<sequence length="90" mass="10164">MKILIFIIASFMLIGVECKEGYPTNSEGCKITCLFNDPYCKGKCINLSTQADKKWKGVEGYCNRRDIACYCKNLPENAEVWDPNNNKCVG</sequence>
<feature type="signal peptide" evidence="4">
    <location>
        <begin position="1"/>
        <end position="18"/>
    </location>
</feature>
<feature type="chain" id="PRO_0000413466" description="Putative beta-neurotoxin RjAa14F" evidence="4">
    <location>
        <begin position="19"/>
        <end position="90"/>
    </location>
</feature>
<feature type="domain" description="LCN-type CS-alpha/beta" evidence="5">
    <location>
        <begin position="19"/>
        <end position="89"/>
    </location>
</feature>
<feature type="disulfide bond" evidence="5">
    <location>
        <begin position="29"/>
        <end position="88"/>
    </location>
</feature>
<feature type="disulfide bond" evidence="5">
    <location>
        <begin position="33"/>
        <end position="62"/>
    </location>
</feature>
<feature type="disulfide bond" evidence="5">
    <location>
        <begin position="40"/>
        <end position="69"/>
    </location>
</feature>
<feature type="disulfide bond" evidence="5">
    <location>
        <begin position="44"/>
        <end position="71"/>
    </location>
</feature>
<protein>
    <recommendedName>
        <fullName evidence="3">Putative beta-neurotoxin RjAa14F</fullName>
    </recommendedName>
</protein>
<accession>F2YLA3</accession>
<keyword id="KW-1015">Disulfide bond</keyword>
<keyword id="KW-0872">Ion channel impairing toxin</keyword>
<keyword id="KW-0528">Neurotoxin</keyword>
<keyword id="KW-0964">Secreted</keyword>
<keyword id="KW-0732">Signal</keyword>
<keyword id="KW-0800">Toxin</keyword>
<keyword id="KW-0738">Voltage-gated sodium channel impairing toxin</keyword>
<proteinExistence type="inferred from homology"/>
<reference evidence="8" key="1">
    <citation type="journal article" date="2011" name="Toxicon">
        <title>Biochemical and molecular characterization of the venom from the Cuban scorpion Rhopalurus junceus.</title>
        <authorList>
            <person name="Garcia-Gomez B.I."/>
            <person name="Coronas F.I."/>
            <person name="Restano-Cassulini R."/>
            <person name="Rodriguez R.R."/>
            <person name="Possani L.D."/>
        </authorList>
    </citation>
    <scope>NUCLEOTIDE SEQUENCE [MRNA]</scope>
    <source>
        <tissue evidence="8">Venom gland</tissue>
    </source>
</reference>
<comment type="function">
    <text evidence="1">Beta toxins bind voltage-independently at site-4 of sodium channels (Nav) and shift the voltage of activation toward more negative potentials thereby affecting sodium channel activation and promoting spontaneous and repetitive firing.</text>
</comment>
<comment type="subcellular location">
    <subcellularLocation>
        <location evidence="2">Secreted</location>
    </subcellularLocation>
</comment>
<comment type="tissue specificity">
    <text evidence="7">Expressed by the venom gland.</text>
</comment>
<comment type="domain">
    <text evidence="6">Has the structural arrangement of an alpha-helix connected to antiparallel beta-sheets by disulfide bonds (CS-alpha/beta).</text>
</comment>
<comment type="similarity">
    <text evidence="4">Belongs to the long (4 C-C) scorpion toxin superfamily. Sodium channel inhibitor family. Beta subfamily.</text>
</comment>
<name>SX14F_RHOJU</name>
<organism>
    <name type="scientific">Rhopalurus junceus</name>
    <name type="common">Caribbean blue scorpion</name>
    <dbReference type="NCBI Taxonomy" id="419285"/>
    <lineage>
        <taxon>Eukaryota</taxon>
        <taxon>Metazoa</taxon>
        <taxon>Ecdysozoa</taxon>
        <taxon>Arthropoda</taxon>
        <taxon>Chelicerata</taxon>
        <taxon>Arachnida</taxon>
        <taxon>Scorpiones</taxon>
        <taxon>Buthida</taxon>
        <taxon>Buthoidea</taxon>
        <taxon>Buthidae</taxon>
        <taxon>Rhopalurus</taxon>
    </lineage>
</organism>
<dbReference type="EMBL" id="JF309048">
    <property type="protein sequence ID" value="ADZ89306.1"/>
    <property type="molecule type" value="mRNA"/>
</dbReference>
<dbReference type="SMR" id="F2YLA3"/>
<dbReference type="GO" id="GO:0005576">
    <property type="term" value="C:extracellular region"/>
    <property type="evidence" value="ECO:0007669"/>
    <property type="project" value="UniProtKB-SubCell"/>
</dbReference>
<dbReference type="GO" id="GO:0019871">
    <property type="term" value="F:sodium channel inhibitor activity"/>
    <property type="evidence" value="ECO:0007669"/>
    <property type="project" value="InterPro"/>
</dbReference>
<dbReference type="GO" id="GO:0090729">
    <property type="term" value="F:toxin activity"/>
    <property type="evidence" value="ECO:0007669"/>
    <property type="project" value="UniProtKB-KW"/>
</dbReference>
<dbReference type="CDD" id="cd23106">
    <property type="entry name" value="neurotoxins_LC_scorpion"/>
    <property type="match status" value="1"/>
</dbReference>
<dbReference type="Gene3D" id="3.30.30.10">
    <property type="entry name" value="Knottin, scorpion toxin-like"/>
    <property type="match status" value="1"/>
</dbReference>
<dbReference type="InterPro" id="IPR044062">
    <property type="entry name" value="LCN-type_CS_alpha_beta_dom"/>
</dbReference>
<dbReference type="InterPro" id="IPR036574">
    <property type="entry name" value="Scorpion_toxin-like_sf"/>
</dbReference>
<dbReference type="InterPro" id="IPR002061">
    <property type="entry name" value="Scorpion_toxinL/defensin"/>
</dbReference>
<dbReference type="Pfam" id="PF00537">
    <property type="entry name" value="Toxin_3"/>
    <property type="match status" value="1"/>
</dbReference>
<dbReference type="SUPFAM" id="SSF57095">
    <property type="entry name" value="Scorpion toxin-like"/>
    <property type="match status" value="1"/>
</dbReference>
<dbReference type="PROSITE" id="PS51863">
    <property type="entry name" value="LCN_CSAB"/>
    <property type="match status" value="1"/>
</dbReference>